<protein>
    <recommendedName>
        <fullName evidence="1">tRNA 2-selenouridine synthase</fullName>
        <ecNumber evidence="1">2.9.1.3</ecNumber>
    </recommendedName>
</protein>
<gene>
    <name evidence="1" type="primary">selU</name>
    <name type="ordered locus">Avin_10190</name>
</gene>
<name>SELU_AZOVD</name>
<dbReference type="EC" id="2.9.1.3" evidence="1"/>
<dbReference type="EMBL" id="CP001157">
    <property type="protein sequence ID" value="ACO77251.1"/>
    <property type="molecule type" value="Genomic_DNA"/>
</dbReference>
<dbReference type="RefSeq" id="WP_012699674.1">
    <property type="nucleotide sequence ID" value="NC_012560.1"/>
</dbReference>
<dbReference type="SMR" id="C1DNN5"/>
<dbReference type="STRING" id="322710.Avin_10190"/>
<dbReference type="EnsemblBacteria" id="ACO77251">
    <property type="protein sequence ID" value="ACO77251"/>
    <property type="gene ID" value="Avin_10190"/>
</dbReference>
<dbReference type="GeneID" id="88184367"/>
<dbReference type="KEGG" id="avn:Avin_10190"/>
<dbReference type="eggNOG" id="COG2603">
    <property type="taxonomic scope" value="Bacteria"/>
</dbReference>
<dbReference type="HOGENOM" id="CLU_043456_1_0_6"/>
<dbReference type="OrthoDB" id="9808735at2"/>
<dbReference type="Proteomes" id="UP000002424">
    <property type="component" value="Chromosome"/>
</dbReference>
<dbReference type="GO" id="GO:0016765">
    <property type="term" value="F:transferase activity, transferring alkyl or aryl (other than methyl) groups"/>
    <property type="evidence" value="ECO:0007669"/>
    <property type="project" value="UniProtKB-UniRule"/>
</dbReference>
<dbReference type="GO" id="GO:0043828">
    <property type="term" value="F:tRNA 2-selenouridine synthase activity"/>
    <property type="evidence" value="ECO:0007669"/>
    <property type="project" value="UniProtKB-EC"/>
</dbReference>
<dbReference type="GO" id="GO:0002098">
    <property type="term" value="P:tRNA wobble uridine modification"/>
    <property type="evidence" value="ECO:0007669"/>
    <property type="project" value="UniProtKB-UniRule"/>
</dbReference>
<dbReference type="CDD" id="cd01520">
    <property type="entry name" value="RHOD_YbbB"/>
    <property type="match status" value="1"/>
</dbReference>
<dbReference type="Gene3D" id="3.40.250.10">
    <property type="entry name" value="Rhodanese-like domain"/>
    <property type="match status" value="1"/>
</dbReference>
<dbReference type="HAMAP" id="MF_01622">
    <property type="entry name" value="tRNA_sel_U_synth"/>
    <property type="match status" value="1"/>
</dbReference>
<dbReference type="InterPro" id="IPR027417">
    <property type="entry name" value="P-loop_NTPase"/>
</dbReference>
<dbReference type="InterPro" id="IPR001763">
    <property type="entry name" value="Rhodanese-like_dom"/>
</dbReference>
<dbReference type="InterPro" id="IPR036873">
    <property type="entry name" value="Rhodanese-like_dom_sf"/>
</dbReference>
<dbReference type="InterPro" id="IPR017582">
    <property type="entry name" value="SelU"/>
</dbReference>
<dbReference type="NCBIfam" id="NF008751">
    <property type="entry name" value="PRK11784.1-3"/>
    <property type="match status" value="1"/>
</dbReference>
<dbReference type="NCBIfam" id="TIGR03167">
    <property type="entry name" value="tRNA_sel_U_synt"/>
    <property type="match status" value="1"/>
</dbReference>
<dbReference type="PANTHER" id="PTHR30401">
    <property type="entry name" value="TRNA 2-SELENOURIDINE SYNTHASE"/>
    <property type="match status" value="1"/>
</dbReference>
<dbReference type="PANTHER" id="PTHR30401:SF0">
    <property type="entry name" value="TRNA 2-SELENOURIDINE SYNTHASE"/>
    <property type="match status" value="1"/>
</dbReference>
<dbReference type="SMART" id="SM00450">
    <property type="entry name" value="RHOD"/>
    <property type="match status" value="1"/>
</dbReference>
<dbReference type="SUPFAM" id="SSF52540">
    <property type="entry name" value="P-loop containing nucleoside triphosphate hydrolases"/>
    <property type="match status" value="1"/>
</dbReference>
<dbReference type="SUPFAM" id="SSF52821">
    <property type="entry name" value="Rhodanese/Cell cycle control phosphatase"/>
    <property type="match status" value="1"/>
</dbReference>
<dbReference type="PROSITE" id="PS50206">
    <property type="entry name" value="RHODANESE_3"/>
    <property type="match status" value="1"/>
</dbReference>
<keyword id="KW-0711">Selenium</keyword>
<keyword id="KW-0808">Transferase</keyword>
<feature type="chain" id="PRO_1000215740" description="tRNA 2-selenouridine synthase">
    <location>
        <begin position="1"/>
        <end position="370"/>
    </location>
</feature>
<feature type="domain" description="Rhodanese" evidence="1">
    <location>
        <begin position="12"/>
        <end position="136"/>
    </location>
</feature>
<feature type="active site" description="S-selanylcysteine intermediate" evidence="1">
    <location>
        <position position="95"/>
    </location>
</feature>
<sequence>MRADTADYPQLFLEDVPMMDTRAPVEFAGGAFPNVLNLPLMTDSERQKVGTCYKQHGQRAAIELGHRLVSGRTKELRIQAWADFARAHPEGYLYCFRGGLRSQIVQQWLRDEAGIDYPRVTGGYKAMRNFLLDTTRQATAQCAFVLVGGLTGTGKTEVIAALGNALDLEGHANHRGSSFGKRATPQPAQIDFENRLAIDILRKRAAGVGRFVLEDESRLVGSCSLPLELHQGMQRYPLVWLEDSFEGRVERILRDYVVDLCAEFVAVEGPQAGFAAFAARLTQSLANIVKRLGGERYQRLSTLMARALAEQEAGRGVALHRDWIVGLLREYYDPMYAYQRESKAERIVFSGDREAVLAYLRECAAGAVDG</sequence>
<comment type="function">
    <text evidence="1">Involved in the post-transcriptional modification of the uridine at the wobble position (U34) of tRNA(Lys), tRNA(Glu) and tRNA(Gln). Catalyzes the conversion of 2-thiouridine (S2U-RNA) to 2-selenouridine (Se2U-RNA). Acts in a two-step process involving geranylation of 2-thiouridine (S2U) to S-geranyl-2-thiouridine (geS2U) and subsequent selenation of the latter derivative to 2-selenouridine (Se2U) in the tRNA chain.</text>
</comment>
<comment type="catalytic activity">
    <reaction evidence="1">
        <text>5-methylaminomethyl-2-thiouridine(34) in tRNA + selenophosphate + (2E)-geranyl diphosphate + H2O + H(+) = 5-methylaminomethyl-2-selenouridine(34) in tRNA + (2E)-thiogeraniol + phosphate + diphosphate</text>
        <dbReference type="Rhea" id="RHEA:42716"/>
        <dbReference type="Rhea" id="RHEA-COMP:10195"/>
        <dbReference type="Rhea" id="RHEA-COMP:10196"/>
        <dbReference type="ChEBI" id="CHEBI:15377"/>
        <dbReference type="ChEBI" id="CHEBI:15378"/>
        <dbReference type="ChEBI" id="CHEBI:16144"/>
        <dbReference type="ChEBI" id="CHEBI:33019"/>
        <dbReference type="ChEBI" id="CHEBI:43474"/>
        <dbReference type="ChEBI" id="CHEBI:58057"/>
        <dbReference type="ChEBI" id="CHEBI:74455"/>
        <dbReference type="ChEBI" id="CHEBI:82743"/>
        <dbReference type="ChEBI" id="CHEBI:143703"/>
        <dbReference type="EC" id="2.9.1.3"/>
    </reaction>
    <physiologicalReaction direction="left-to-right" evidence="1">
        <dbReference type="Rhea" id="RHEA:42717"/>
    </physiologicalReaction>
</comment>
<comment type="catalytic activity">
    <reaction evidence="1">
        <text>5-methylaminomethyl-2-thiouridine(34) in tRNA + (2E)-geranyl diphosphate = 5-methylaminomethyl-S-(2E)-geranyl-thiouridine(34) in tRNA + diphosphate</text>
        <dbReference type="Rhea" id="RHEA:14085"/>
        <dbReference type="Rhea" id="RHEA-COMP:10195"/>
        <dbReference type="Rhea" id="RHEA-COMP:14654"/>
        <dbReference type="ChEBI" id="CHEBI:33019"/>
        <dbReference type="ChEBI" id="CHEBI:58057"/>
        <dbReference type="ChEBI" id="CHEBI:74455"/>
        <dbReference type="ChEBI" id="CHEBI:140632"/>
    </reaction>
    <physiologicalReaction direction="left-to-right" evidence="1">
        <dbReference type="Rhea" id="RHEA:14086"/>
    </physiologicalReaction>
</comment>
<comment type="catalytic activity">
    <reaction evidence="1">
        <text>5-methylaminomethyl-S-(2E)-geranyl-thiouridine(34) in tRNA + selenophosphate + H(+) = 5-methylaminomethyl-2-(Se-phospho)selenouridine(34) in tRNA + (2E)-thiogeraniol</text>
        <dbReference type="Rhea" id="RHEA:60172"/>
        <dbReference type="Rhea" id="RHEA-COMP:14654"/>
        <dbReference type="Rhea" id="RHEA-COMP:15523"/>
        <dbReference type="ChEBI" id="CHEBI:15378"/>
        <dbReference type="ChEBI" id="CHEBI:16144"/>
        <dbReference type="ChEBI" id="CHEBI:140632"/>
        <dbReference type="ChEBI" id="CHEBI:143702"/>
        <dbReference type="ChEBI" id="CHEBI:143703"/>
    </reaction>
    <physiologicalReaction direction="left-to-right" evidence="1">
        <dbReference type="Rhea" id="RHEA:60173"/>
    </physiologicalReaction>
</comment>
<comment type="catalytic activity">
    <reaction evidence="1">
        <text>5-methylaminomethyl-2-(Se-phospho)selenouridine(34) in tRNA + H2O = 5-methylaminomethyl-2-selenouridine(34) in tRNA + phosphate</text>
        <dbReference type="Rhea" id="RHEA:60176"/>
        <dbReference type="Rhea" id="RHEA-COMP:10196"/>
        <dbReference type="Rhea" id="RHEA-COMP:15523"/>
        <dbReference type="ChEBI" id="CHEBI:15377"/>
        <dbReference type="ChEBI" id="CHEBI:43474"/>
        <dbReference type="ChEBI" id="CHEBI:82743"/>
        <dbReference type="ChEBI" id="CHEBI:143702"/>
    </reaction>
    <physiologicalReaction direction="left-to-right" evidence="1">
        <dbReference type="Rhea" id="RHEA:60177"/>
    </physiologicalReaction>
</comment>
<comment type="subunit">
    <text evidence="1">Monomer.</text>
</comment>
<comment type="similarity">
    <text evidence="1">Belongs to the SelU family.</text>
</comment>
<proteinExistence type="inferred from homology"/>
<organism>
    <name type="scientific">Azotobacter vinelandii (strain DJ / ATCC BAA-1303)</name>
    <dbReference type="NCBI Taxonomy" id="322710"/>
    <lineage>
        <taxon>Bacteria</taxon>
        <taxon>Pseudomonadati</taxon>
        <taxon>Pseudomonadota</taxon>
        <taxon>Gammaproteobacteria</taxon>
        <taxon>Pseudomonadales</taxon>
        <taxon>Pseudomonadaceae</taxon>
        <taxon>Azotobacter</taxon>
    </lineage>
</organism>
<accession>C1DNN5</accession>
<reference key="1">
    <citation type="journal article" date="2009" name="J. Bacteriol.">
        <title>Genome sequence of Azotobacter vinelandii, an obligate aerobe specialized to support diverse anaerobic metabolic processes.</title>
        <authorList>
            <person name="Setubal J.C."/>
            <person name="Dos Santos P."/>
            <person name="Goldman B.S."/>
            <person name="Ertesvaag H."/>
            <person name="Espin G."/>
            <person name="Rubio L.M."/>
            <person name="Valla S."/>
            <person name="Almeida N.F."/>
            <person name="Balasubramanian D."/>
            <person name="Cromes L."/>
            <person name="Curatti L."/>
            <person name="Du Z."/>
            <person name="Godsy E."/>
            <person name="Goodner B."/>
            <person name="Hellner-Burris K."/>
            <person name="Hernandez J.A."/>
            <person name="Houmiel K."/>
            <person name="Imperial J."/>
            <person name="Kennedy C."/>
            <person name="Larson T.J."/>
            <person name="Latreille P."/>
            <person name="Ligon L.S."/>
            <person name="Lu J."/>
            <person name="Maerk M."/>
            <person name="Miller N.M."/>
            <person name="Norton S."/>
            <person name="O'Carroll I.P."/>
            <person name="Paulsen I."/>
            <person name="Raulfs E.C."/>
            <person name="Roemer R."/>
            <person name="Rosser J."/>
            <person name="Segura D."/>
            <person name="Slater S."/>
            <person name="Stricklin S.L."/>
            <person name="Studholme D.J."/>
            <person name="Sun J."/>
            <person name="Viana C.J."/>
            <person name="Wallin E."/>
            <person name="Wang B."/>
            <person name="Wheeler C."/>
            <person name="Zhu H."/>
            <person name="Dean D.R."/>
            <person name="Dixon R."/>
            <person name="Wood D."/>
        </authorList>
    </citation>
    <scope>NUCLEOTIDE SEQUENCE [LARGE SCALE GENOMIC DNA]</scope>
    <source>
        <strain>DJ / ATCC BAA-1303</strain>
    </source>
</reference>
<evidence type="ECO:0000255" key="1">
    <source>
        <dbReference type="HAMAP-Rule" id="MF_01622"/>
    </source>
</evidence>